<gene>
    <name evidence="2" type="primary">hppA</name>
    <name type="ordered locus">BMEI1185</name>
</gene>
<name>HPPA_BRUME</name>
<dbReference type="EC" id="7.1.3.1" evidence="2"/>
<dbReference type="EMBL" id="AE008917">
    <property type="protein sequence ID" value="AAL52366.1"/>
    <property type="status" value="ALT_INIT"/>
    <property type="molecule type" value="Genomic_DNA"/>
</dbReference>
<dbReference type="PIR" id="AC3400">
    <property type="entry name" value="AC3400"/>
</dbReference>
<dbReference type="RefSeq" id="WP_002963908.1">
    <property type="nucleotide sequence ID" value="NZ_GG703778.1"/>
</dbReference>
<dbReference type="SMR" id="Q8YGH4"/>
<dbReference type="KEGG" id="bme:BMEI1185"/>
<dbReference type="eggNOG" id="COG3808">
    <property type="taxonomic scope" value="Bacteria"/>
</dbReference>
<dbReference type="Proteomes" id="UP000000419">
    <property type="component" value="Chromosome I"/>
</dbReference>
<dbReference type="GO" id="GO:0005886">
    <property type="term" value="C:plasma membrane"/>
    <property type="evidence" value="ECO:0007669"/>
    <property type="project" value="UniProtKB-SubCell"/>
</dbReference>
<dbReference type="GO" id="GO:0009678">
    <property type="term" value="F:diphosphate hydrolysis-driven proton transmembrane transporter activity"/>
    <property type="evidence" value="ECO:0007669"/>
    <property type="project" value="UniProtKB-UniRule"/>
</dbReference>
<dbReference type="GO" id="GO:0004427">
    <property type="term" value="F:inorganic diphosphate phosphatase activity"/>
    <property type="evidence" value="ECO:0007669"/>
    <property type="project" value="UniProtKB-UniRule"/>
</dbReference>
<dbReference type="GO" id="GO:0000287">
    <property type="term" value="F:magnesium ion binding"/>
    <property type="evidence" value="ECO:0007669"/>
    <property type="project" value="UniProtKB-UniRule"/>
</dbReference>
<dbReference type="HAMAP" id="MF_01129">
    <property type="entry name" value="PPase_energized_pump"/>
    <property type="match status" value="1"/>
</dbReference>
<dbReference type="InterPro" id="IPR004131">
    <property type="entry name" value="PPase-energised_H-pump"/>
</dbReference>
<dbReference type="NCBIfam" id="NF001951">
    <property type="entry name" value="PRK00733.1-2"/>
    <property type="match status" value="1"/>
</dbReference>
<dbReference type="NCBIfam" id="NF001960">
    <property type="entry name" value="PRK00733.3-5"/>
    <property type="match status" value="1"/>
</dbReference>
<dbReference type="NCBIfam" id="TIGR01104">
    <property type="entry name" value="V_PPase"/>
    <property type="match status" value="1"/>
</dbReference>
<dbReference type="PANTHER" id="PTHR31998">
    <property type="entry name" value="K(+)-INSENSITIVE PYROPHOSPHATE-ENERGIZED PROTON PUMP"/>
    <property type="match status" value="1"/>
</dbReference>
<dbReference type="Pfam" id="PF03030">
    <property type="entry name" value="H_PPase"/>
    <property type="match status" value="1"/>
</dbReference>
<dbReference type="PIRSF" id="PIRSF001265">
    <property type="entry name" value="H+-PPase"/>
    <property type="match status" value="1"/>
</dbReference>
<evidence type="ECO:0000250" key="1"/>
<evidence type="ECO:0000255" key="2">
    <source>
        <dbReference type="HAMAP-Rule" id="MF_01129"/>
    </source>
</evidence>
<evidence type="ECO:0000305" key="3"/>
<keyword id="KW-0106">Calcium</keyword>
<keyword id="KW-0997">Cell inner membrane</keyword>
<keyword id="KW-1003">Cell membrane</keyword>
<keyword id="KW-0375">Hydrogen ion transport</keyword>
<keyword id="KW-0406">Ion transport</keyword>
<keyword id="KW-0460">Magnesium</keyword>
<keyword id="KW-0472">Membrane</keyword>
<keyword id="KW-0479">Metal-binding</keyword>
<keyword id="KW-1278">Translocase</keyword>
<keyword id="KW-0812">Transmembrane</keyword>
<keyword id="KW-1133">Transmembrane helix</keyword>
<keyword id="KW-0813">Transport</keyword>
<reference key="1">
    <citation type="journal article" date="2002" name="Proc. Natl. Acad. Sci. U.S.A.">
        <title>The genome sequence of the facultative intracellular pathogen Brucella melitensis.</title>
        <authorList>
            <person name="DelVecchio V.G."/>
            <person name="Kapatral V."/>
            <person name="Redkar R.J."/>
            <person name="Patra G."/>
            <person name="Mujer C."/>
            <person name="Los T."/>
            <person name="Ivanova N."/>
            <person name="Anderson I."/>
            <person name="Bhattacharyya A."/>
            <person name="Lykidis A."/>
            <person name="Reznik G."/>
            <person name="Jablonski L."/>
            <person name="Larsen N."/>
            <person name="D'Souza M."/>
            <person name="Bernal A."/>
            <person name="Mazur M."/>
            <person name="Goltsman E."/>
            <person name="Selkov E."/>
            <person name="Elzer P.H."/>
            <person name="Hagius S."/>
            <person name="O'Callaghan D."/>
            <person name="Letesson J.-J."/>
            <person name="Haselkorn R."/>
            <person name="Kyrpides N.C."/>
            <person name="Overbeek R."/>
        </authorList>
    </citation>
    <scope>NUCLEOTIDE SEQUENCE [LARGE SCALE GENOMIC DNA]</scope>
    <source>
        <strain>ATCC 23456 / CCUG 17765 / NCTC 10094 / 16M</strain>
    </source>
</reference>
<proteinExistence type="inferred from homology"/>
<sequence length="718" mass="73341">MQMGMAVLVLVIACGVLSVLFAIWAIRSVLAADQGTQRMQEIAEAIREGASAYLTRQYSTIAIVGIVVFLLAWYLLSLNAAMGFLIGAVLSGVTGFIGMHVSVRANVRTAQAASLSLAGGLELAFKSGAITGLLVAGLALLGVSVYYFVLTVWLGYAPADRTVIDSLVSLGFGASLISIFARLGGGIFTKGADVGGDLVGKVEAGIPEDDPRNPATIADNVGDNVGDCAGMAADLFETYAVTVVATMVLGAIFFHGSDALTNVMLYPLMICGACVITSIAGTFFVKLGVNGSIMGALYKGLIATGLLSIVGLGVANTLTVGWGEIGTVAGKSITGTNLFVCGLIGLIVTGLIVVITEYYTGTNKRPVNSIAQASVTGHGTNVIQGLAVSLESTALPAIVIVGGIISTYQLAGLFGTAIAVTAMLGIAGMIVALDAFGPVTDNAGGIAEMAGLDPEVRKATDALDAVGNTTKAVTKGYAIGSAGLGALVLFAAYSNDLAYFAANGQIYPYFADMGPVSFDLSNPYVVAGLIFGGLIPYLFGGMAMTAVGRAGGAVVQEVRRQFREKPGIMTGKERPDYARAVDLLTKAAIREMIIPSLLPVLAPIVVYFGVLLISGSKAAAFAALGASLLGVIINGLFVAISMTSGGGAWDNAKKSFEDGFTDADGVKHMKGSEAHKASVTGDTVGDPYKDTAGPAVNPAIKITNIVALLLLAVLAHMA</sequence>
<accession>Q8YGH4</accession>
<organism>
    <name type="scientific">Brucella melitensis biotype 1 (strain ATCC 23456 / CCUG 17765 / NCTC 10094 / 16M)</name>
    <dbReference type="NCBI Taxonomy" id="224914"/>
    <lineage>
        <taxon>Bacteria</taxon>
        <taxon>Pseudomonadati</taxon>
        <taxon>Pseudomonadota</taxon>
        <taxon>Alphaproteobacteria</taxon>
        <taxon>Hyphomicrobiales</taxon>
        <taxon>Brucellaceae</taxon>
        <taxon>Brucella/Ochrobactrum group</taxon>
        <taxon>Brucella</taxon>
    </lineage>
</organism>
<comment type="function">
    <text evidence="2">Proton pump that utilizes the energy of pyrophosphate hydrolysis as the driving force for proton movement across the membrane. Generates a proton motive force.</text>
</comment>
<comment type="catalytic activity">
    <reaction evidence="2">
        <text>diphosphate + H2O + H(+)(in) = 2 phosphate + 2 H(+)(out)</text>
        <dbReference type="Rhea" id="RHEA:13973"/>
        <dbReference type="ChEBI" id="CHEBI:15377"/>
        <dbReference type="ChEBI" id="CHEBI:15378"/>
        <dbReference type="ChEBI" id="CHEBI:33019"/>
        <dbReference type="ChEBI" id="CHEBI:43474"/>
        <dbReference type="EC" id="7.1.3.1"/>
    </reaction>
</comment>
<comment type="cofactor">
    <cofactor evidence="2">
        <name>Mg(2+)</name>
        <dbReference type="ChEBI" id="CHEBI:18420"/>
    </cofactor>
</comment>
<comment type="subunit">
    <text evidence="2">Homodimer.</text>
</comment>
<comment type="subcellular location">
    <subcellularLocation>
        <location evidence="2">Cell inner membrane</location>
        <topology evidence="2">Multi-pass membrane protein</topology>
    </subcellularLocation>
</comment>
<comment type="similarity">
    <text evidence="2">Belongs to the H(+)-translocating pyrophosphatase (TC 3.A.10) family. K(+)-insensitive subfamily.</text>
</comment>
<comment type="sequence caution" evidence="3">
    <conflict type="erroneous initiation">
        <sequence resource="EMBL-CDS" id="AAL52366"/>
    </conflict>
    <text>Extended N-terminus.</text>
</comment>
<feature type="chain" id="PRO_0000217011" description="K(+)-insensitive pyrophosphate-energized proton pump">
    <location>
        <begin position="1"/>
        <end position="718"/>
    </location>
</feature>
<feature type="transmembrane region" description="Helical" evidence="2">
    <location>
        <begin position="6"/>
        <end position="26"/>
    </location>
</feature>
<feature type="transmembrane region" description="Helical" evidence="2">
    <location>
        <begin position="61"/>
        <end position="81"/>
    </location>
</feature>
<feature type="transmembrane region" description="Helical" evidence="2">
    <location>
        <begin position="83"/>
        <end position="103"/>
    </location>
</feature>
<feature type="transmembrane region" description="Helical" evidence="2">
    <location>
        <begin position="112"/>
        <end position="132"/>
    </location>
</feature>
<feature type="transmembrane region" description="Helical" evidence="2">
    <location>
        <begin position="133"/>
        <end position="153"/>
    </location>
</feature>
<feature type="transmembrane region" description="Helical" evidence="2">
    <location>
        <begin position="168"/>
        <end position="188"/>
    </location>
</feature>
<feature type="transmembrane region" description="Helical" evidence="2">
    <location>
        <begin position="235"/>
        <end position="255"/>
    </location>
</feature>
<feature type="transmembrane region" description="Helical" evidence="2">
    <location>
        <begin position="265"/>
        <end position="285"/>
    </location>
</feature>
<feature type="transmembrane region" description="Helical" evidence="2">
    <location>
        <begin position="300"/>
        <end position="320"/>
    </location>
</feature>
<feature type="transmembrane region" description="Helical" evidence="2">
    <location>
        <begin position="335"/>
        <end position="355"/>
    </location>
</feature>
<feature type="transmembrane region" description="Helical" evidence="2">
    <location>
        <begin position="385"/>
        <end position="405"/>
    </location>
</feature>
<feature type="transmembrane region" description="Helical" evidence="2">
    <location>
        <begin position="413"/>
        <end position="433"/>
    </location>
</feature>
<feature type="transmembrane region" description="Helical" evidence="2">
    <location>
        <begin position="472"/>
        <end position="492"/>
    </location>
</feature>
<feature type="transmembrane region" description="Helical" evidence="2">
    <location>
        <begin position="524"/>
        <end position="544"/>
    </location>
</feature>
<feature type="transmembrane region" description="Helical" evidence="2">
    <location>
        <begin position="593"/>
        <end position="613"/>
    </location>
</feature>
<feature type="transmembrane region" description="Helical" evidence="2">
    <location>
        <begin position="620"/>
        <end position="640"/>
    </location>
</feature>
<feature type="transmembrane region" description="Helical" evidence="2">
    <location>
        <begin position="695"/>
        <end position="715"/>
    </location>
</feature>
<feature type="binding site" evidence="1">
    <location>
        <position position="190"/>
    </location>
    <ligand>
        <name>substrate</name>
    </ligand>
</feature>
<feature type="binding site" evidence="1">
    <location>
        <position position="193"/>
    </location>
    <ligand>
        <name>Mg(2+)</name>
        <dbReference type="ChEBI" id="CHEBI:18420"/>
        <label>1</label>
    </ligand>
</feature>
<feature type="binding site" evidence="1">
    <location>
        <position position="197"/>
    </location>
    <ligand>
        <name>Mg(2+)</name>
        <dbReference type="ChEBI" id="CHEBI:18420"/>
        <label>1</label>
    </ligand>
</feature>
<feature type="binding site" evidence="1">
    <location>
        <position position="220"/>
    </location>
    <ligand>
        <name>Mg(2+)</name>
        <dbReference type="ChEBI" id="CHEBI:18420"/>
        <label>2</label>
    </ligand>
</feature>
<feature type="binding site" evidence="1">
    <location>
        <position position="223"/>
    </location>
    <ligand>
        <name>Mg(2+)</name>
        <dbReference type="ChEBI" id="CHEBI:18420"/>
        <label>2</label>
    </ligand>
</feature>
<feature type="binding site" evidence="1">
    <location>
        <position position="441"/>
    </location>
    <ligand>
        <name>Mg(2+)</name>
        <dbReference type="ChEBI" id="CHEBI:18420"/>
        <label>2</label>
    </ligand>
</feature>
<feature type="binding site" evidence="1">
    <location>
        <position position="650"/>
    </location>
    <ligand>
        <name>Ca(2+)</name>
        <dbReference type="ChEBI" id="CHEBI:29108"/>
    </ligand>
</feature>
<feature type="binding site" evidence="1">
    <location>
        <position position="682"/>
    </location>
    <ligand>
        <name>Ca(2+)</name>
        <dbReference type="ChEBI" id="CHEBI:29108"/>
    </ligand>
</feature>
<feature type="binding site" evidence="1">
    <location>
        <position position="686"/>
    </location>
    <ligand>
        <name>Ca(2+)</name>
        <dbReference type="ChEBI" id="CHEBI:29108"/>
    </ligand>
</feature>
<feature type="binding site" evidence="1">
    <location>
        <position position="689"/>
    </location>
    <ligand>
        <name>substrate</name>
    </ligand>
</feature>
<feature type="site" description="Important for ion transport" evidence="1">
    <location>
        <position position="182"/>
    </location>
</feature>
<feature type="site" description="Important for ion transport" evidence="1">
    <location>
        <position position="227"/>
    </location>
</feature>
<feature type="site" description="Important for ion transport" evidence="1">
    <location>
        <position position="234"/>
    </location>
</feature>
<feature type="site" description="Determinant of potassium independence" evidence="2">
    <location>
        <position position="471"/>
    </location>
</feature>
<feature type="site" description="Important for ion transport" evidence="1">
    <location>
        <position position="690"/>
    </location>
</feature>
<feature type="site" description="Important for ion transport" evidence="1">
    <location>
        <position position="701"/>
    </location>
</feature>
<protein>
    <recommendedName>
        <fullName evidence="2">K(+)-insensitive pyrophosphate-energized proton pump</fullName>
        <ecNumber evidence="2">7.1.3.1</ecNumber>
    </recommendedName>
    <alternativeName>
        <fullName evidence="2">Membrane-bound proton-translocating pyrophosphatase</fullName>
    </alternativeName>
    <alternativeName>
        <fullName evidence="2">Pyrophosphate-energized inorganic pyrophosphatase</fullName>
        <shortName evidence="2">H(+)-PPase</shortName>
    </alternativeName>
</protein>